<sequence length="311" mass="33479">MSKILVFGHQNPDSDAIGSSVAFAYLAKEAYGLDTEAVALGTPNEETAFVLNYFGVEAPRVITSAKAEGAEQVILTDHNEFQQSVSDIAEVEVYGVVDHHRVANFETASPLYMRLEPVGSASSIVYRMFKEHGVAVPKEIAGLMLSGLISDTLLLKSPTTHPTDKIIAPELAELAGVNLEEYGLAMLKAGTNLASKSAEELIDIDAKTFELNGNNVRVAQVNTVDIAEVLERQAEIEAAMQAANESNGYSDFVLMITDIVNSNSEILALGANMDKVEAAFNFKLENNHAFLAGAVSRKKQVVPQLTESFNA</sequence>
<evidence type="ECO:0000255" key="1">
    <source>
        <dbReference type="HAMAP-Rule" id="MF_00207"/>
    </source>
</evidence>
<evidence type="ECO:0000269" key="2">
    <source>
    </source>
</evidence>
<comment type="catalytic activity">
    <reaction evidence="1">
        <text>diphosphate + H2O = 2 phosphate + H(+)</text>
        <dbReference type="Rhea" id="RHEA:24576"/>
        <dbReference type="ChEBI" id="CHEBI:15377"/>
        <dbReference type="ChEBI" id="CHEBI:15378"/>
        <dbReference type="ChEBI" id="CHEBI:33019"/>
        <dbReference type="ChEBI" id="CHEBI:43474"/>
        <dbReference type="EC" id="3.6.1.1"/>
    </reaction>
</comment>
<comment type="cofactor">
    <cofactor evidence="1">
        <name>Mn(2+)</name>
        <dbReference type="ChEBI" id="CHEBI:29035"/>
    </cofactor>
    <text evidence="1">Binds 2 manganese ions per subunit.</text>
</comment>
<comment type="subcellular location">
    <subcellularLocation>
        <location evidence="1">Cytoplasm</location>
    </subcellularLocation>
</comment>
<comment type="PTM">
    <text evidence="2">Phosphorylated on Thr residue(s). This phosphorylation is StkP-dependent in vivo, however, PpaC is not phosphorylated by StkP in vitro. It has been hypothesized that StkP-dependent phosphorylation of PpaC in vitro may require specific reaction conditions or the presence of other interaction partners.</text>
</comment>
<comment type="similarity">
    <text evidence="1">Belongs to the PPase class C family.</text>
</comment>
<gene>
    <name evidence="1" type="primary">ppaC</name>
    <name type="ordered locus">spr1389</name>
</gene>
<accession>P65756</accession>
<accession>Q97PR8</accession>
<protein>
    <recommendedName>
        <fullName evidence="1">Probable manganese-dependent inorganic pyrophosphatase</fullName>
        <ecNumber evidence="1">3.6.1.1</ecNumber>
    </recommendedName>
    <alternativeName>
        <fullName evidence="1">Pyrophosphate phospho-hydrolase</fullName>
        <shortName evidence="1">PPase</shortName>
    </alternativeName>
</protein>
<proteinExistence type="evidence at protein level"/>
<dbReference type="EC" id="3.6.1.1" evidence="1"/>
<dbReference type="EMBL" id="AE007317">
    <property type="protein sequence ID" value="AAL00193.1"/>
    <property type="molecule type" value="Genomic_DNA"/>
</dbReference>
<dbReference type="PIR" id="D98045">
    <property type="entry name" value="D98045"/>
</dbReference>
<dbReference type="RefSeq" id="NP_358982.1">
    <property type="nucleotide sequence ID" value="NC_003098.1"/>
</dbReference>
<dbReference type="RefSeq" id="WP_000036043.1">
    <property type="nucleotide sequence ID" value="NC_003098.1"/>
</dbReference>
<dbReference type="SMR" id="P65756"/>
<dbReference type="STRING" id="171101.spr1389"/>
<dbReference type="KEGG" id="spr:spr1389"/>
<dbReference type="PATRIC" id="fig|171101.6.peg.1504"/>
<dbReference type="eggNOG" id="COG1227">
    <property type="taxonomic scope" value="Bacteria"/>
</dbReference>
<dbReference type="HOGENOM" id="CLU_025243_0_1_9"/>
<dbReference type="Proteomes" id="UP000000586">
    <property type="component" value="Chromosome"/>
</dbReference>
<dbReference type="GO" id="GO:0005737">
    <property type="term" value="C:cytoplasm"/>
    <property type="evidence" value="ECO:0000318"/>
    <property type="project" value="GO_Central"/>
</dbReference>
<dbReference type="GO" id="GO:0004427">
    <property type="term" value="F:inorganic diphosphate phosphatase activity"/>
    <property type="evidence" value="ECO:0007669"/>
    <property type="project" value="UniProtKB-UniRule"/>
</dbReference>
<dbReference type="GO" id="GO:0030145">
    <property type="term" value="F:manganese ion binding"/>
    <property type="evidence" value="ECO:0007669"/>
    <property type="project" value="UniProtKB-UniRule"/>
</dbReference>
<dbReference type="FunFam" id="3.10.310.20:FF:000001">
    <property type="entry name" value="Probable manganese-dependent inorganic pyrophosphatase"/>
    <property type="match status" value="1"/>
</dbReference>
<dbReference type="FunFam" id="3.90.1640.10:FF:000001">
    <property type="entry name" value="Probable manganese-dependent inorganic pyrophosphatase"/>
    <property type="match status" value="1"/>
</dbReference>
<dbReference type="Gene3D" id="3.10.310.20">
    <property type="entry name" value="DHHA2 domain"/>
    <property type="match status" value="1"/>
</dbReference>
<dbReference type="Gene3D" id="3.90.1640.10">
    <property type="entry name" value="inorganic pyrophosphatase (n-terminal core)"/>
    <property type="match status" value="1"/>
</dbReference>
<dbReference type="HAMAP" id="MF_00207">
    <property type="entry name" value="PPase_C"/>
    <property type="match status" value="1"/>
</dbReference>
<dbReference type="InterPro" id="IPR001667">
    <property type="entry name" value="DDH_dom"/>
</dbReference>
<dbReference type="InterPro" id="IPR038763">
    <property type="entry name" value="DHH_sf"/>
</dbReference>
<dbReference type="InterPro" id="IPR004097">
    <property type="entry name" value="DHHA2"/>
</dbReference>
<dbReference type="InterPro" id="IPR038222">
    <property type="entry name" value="DHHA2_dom_sf"/>
</dbReference>
<dbReference type="InterPro" id="IPR022934">
    <property type="entry name" value="Mn-dep_inorganic_PyrPase"/>
</dbReference>
<dbReference type="InterPro" id="IPR051319">
    <property type="entry name" value="Oligoribo/pAp-PDE_c-di-AMP_PDE"/>
</dbReference>
<dbReference type="NCBIfam" id="NF003877">
    <property type="entry name" value="PRK05427.1"/>
    <property type="match status" value="1"/>
</dbReference>
<dbReference type="PANTHER" id="PTHR47618">
    <property type="entry name" value="BIFUNCTIONAL OLIGORIBONUCLEASE AND PAP PHOSPHATASE NRNA"/>
    <property type="match status" value="1"/>
</dbReference>
<dbReference type="PANTHER" id="PTHR47618:SF1">
    <property type="entry name" value="BIFUNCTIONAL OLIGORIBONUCLEASE AND PAP PHOSPHATASE NRNA"/>
    <property type="match status" value="1"/>
</dbReference>
<dbReference type="Pfam" id="PF01368">
    <property type="entry name" value="DHH"/>
    <property type="match status" value="1"/>
</dbReference>
<dbReference type="Pfam" id="PF02833">
    <property type="entry name" value="DHHA2"/>
    <property type="match status" value="1"/>
</dbReference>
<dbReference type="SMART" id="SM01131">
    <property type="entry name" value="DHHA2"/>
    <property type="match status" value="1"/>
</dbReference>
<dbReference type="SUPFAM" id="SSF64182">
    <property type="entry name" value="DHH phosphoesterases"/>
    <property type="match status" value="1"/>
</dbReference>
<keyword id="KW-0963">Cytoplasm</keyword>
<keyword id="KW-0378">Hydrolase</keyword>
<keyword id="KW-0464">Manganese</keyword>
<keyword id="KW-0479">Metal-binding</keyword>
<keyword id="KW-0597">Phosphoprotein</keyword>
<keyword id="KW-1185">Reference proteome</keyword>
<reference key="1">
    <citation type="journal article" date="2001" name="J. Bacteriol.">
        <title>Genome of the bacterium Streptococcus pneumoniae strain R6.</title>
        <authorList>
            <person name="Hoskins J."/>
            <person name="Alborn W.E. Jr."/>
            <person name="Arnold J."/>
            <person name="Blaszczak L.C."/>
            <person name="Burgett S."/>
            <person name="DeHoff B.S."/>
            <person name="Estrem S.T."/>
            <person name="Fritz L."/>
            <person name="Fu D.-J."/>
            <person name="Fuller W."/>
            <person name="Geringer C."/>
            <person name="Gilmour R."/>
            <person name="Glass J.S."/>
            <person name="Khoja H."/>
            <person name="Kraft A.R."/>
            <person name="Lagace R.E."/>
            <person name="LeBlanc D.J."/>
            <person name="Lee L.N."/>
            <person name="Lefkowitz E.J."/>
            <person name="Lu J."/>
            <person name="Matsushima P."/>
            <person name="McAhren S.M."/>
            <person name="McHenney M."/>
            <person name="McLeaster K."/>
            <person name="Mundy C.W."/>
            <person name="Nicas T.I."/>
            <person name="Norris F.H."/>
            <person name="O'Gara M."/>
            <person name="Peery R.B."/>
            <person name="Robertson G.T."/>
            <person name="Rockey P."/>
            <person name="Sun P.-M."/>
            <person name="Winkler M.E."/>
            <person name="Yang Y."/>
            <person name="Young-Bellido M."/>
            <person name="Zhao G."/>
            <person name="Zook C.A."/>
            <person name="Baltz R.H."/>
            <person name="Jaskunas S.R."/>
            <person name="Rosteck P.R. Jr."/>
            <person name="Skatrud P.L."/>
            <person name="Glass J.I."/>
        </authorList>
    </citation>
    <scope>NUCLEOTIDE SEQUENCE [LARGE SCALE GENOMIC DNA]</scope>
    <source>
        <strain>ATCC BAA-255 / R6</strain>
    </source>
</reference>
<reference key="2">
    <citation type="journal article" date="2010" name="J. Bacteriol.">
        <title>Identification of multiple substrates of the StkP Ser/Thr protein kinase in Streptococcus pneumoniae.</title>
        <authorList>
            <person name="Novakova L."/>
            <person name="Bezouskova S."/>
            <person name="Pompach P."/>
            <person name="Spidlova P."/>
            <person name="Saskova L."/>
            <person name="Weiser J."/>
            <person name="Branny P."/>
        </authorList>
    </citation>
    <scope>PHOSPHORYLATION</scope>
    <scope>IDENTIFICATION BY MASS SPECTROMETRY</scope>
</reference>
<feature type="chain" id="PRO_0000158592" description="Probable manganese-dependent inorganic pyrophosphatase">
    <location>
        <begin position="1"/>
        <end position="311"/>
    </location>
</feature>
<feature type="binding site" evidence="1">
    <location>
        <position position="9"/>
    </location>
    <ligand>
        <name>Mn(2+)</name>
        <dbReference type="ChEBI" id="CHEBI:29035"/>
        <label>1</label>
    </ligand>
</feature>
<feature type="binding site" evidence="1">
    <location>
        <position position="13"/>
    </location>
    <ligand>
        <name>Mn(2+)</name>
        <dbReference type="ChEBI" id="CHEBI:29035"/>
        <label>1</label>
    </ligand>
</feature>
<feature type="binding site" evidence="1">
    <location>
        <position position="15"/>
    </location>
    <ligand>
        <name>Mn(2+)</name>
        <dbReference type="ChEBI" id="CHEBI:29035"/>
        <label>2</label>
    </ligand>
</feature>
<feature type="binding site" evidence="1">
    <location>
        <position position="77"/>
    </location>
    <ligand>
        <name>Mn(2+)</name>
        <dbReference type="ChEBI" id="CHEBI:29035"/>
        <label>1</label>
    </ligand>
</feature>
<feature type="binding site" evidence="1">
    <location>
        <position position="77"/>
    </location>
    <ligand>
        <name>Mn(2+)</name>
        <dbReference type="ChEBI" id="CHEBI:29035"/>
        <label>2</label>
    </ligand>
</feature>
<feature type="binding site" evidence="1">
    <location>
        <position position="99"/>
    </location>
    <ligand>
        <name>Mn(2+)</name>
        <dbReference type="ChEBI" id="CHEBI:29035"/>
        <label>2</label>
    </ligand>
</feature>
<feature type="binding site" evidence="1">
    <location>
        <position position="151"/>
    </location>
    <ligand>
        <name>Mn(2+)</name>
        <dbReference type="ChEBI" id="CHEBI:29035"/>
        <label>2</label>
    </ligand>
</feature>
<name>PPAC_STRR6</name>
<organism>
    <name type="scientific">Streptococcus pneumoniae (strain ATCC BAA-255 / R6)</name>
    <dbReference type="NCBI Taxonomy" id="171101"/>
    <lineage>
        <taxon>Bacteria</taxon>
        <taxon>Bacillati</taxon>
        <taxon>Bacillota</taxon>
        <taxon>Bacilli</taxon>
        <taxon>Lactobacillales</taxon>
        <taxon>Streptococcaceae</taxon>
        <taxon>Streptococcus</taxon>
    </lineage>
</organism>